<proteinExistence type="inferred from homology"/>
<accession>Q2NZB4</accession>
<dbReference type="EC" id="6.3.2.13" evidence="1"/>
<dbReference type="EMBL" id="AP008229">
    <property type="protein sequence ID" value="BAE70363.1"/>
    <property type="molecule type" value="Genomic_DNA"/>
</dbReference>
<dbReference type="SMR" id="Q2NZB4"/>
<dbReference type="KEGG" id="xom:XOO3608"/>
<dbReference type="HOGENOM" id="CLU_022291_3_2_6"/>
<dbReference type="UniPathway" id="UPA00219"/>
<dbReference type="GO" id="GO:0005737">
    <property type="term" value="C:cytoplasm"/>
    <property type="evidence" value="ECO:0007669"/>
    <property type="project" value="UniProtKB-SubCell"/>
</dbReference>
<dbReference type="GO" id="GO:0005524">
    <property type="term" value="F:ATP binding"/>
    <property type="evidence" value="ECO:0007669"/>
    <property type="project" value="UniProtKB-UniRule"/>
</dbReference>
<dbReference type="GO" id="GO:0000287">
    <property type="term" value="F:magnesium ion binding"/>
    <property type="evidence" value="ECO:0007669"/>
    <property type="project" value="UniProtKB-UniRule"/>
</dbReference>
<dbReference type="GO" id="GO:0008765">
    <property type="term" value="F:UDP-N-acetylmuramoylalanyl-D-glutamate-2,6-diaminopimelate ligase activity"/>
    <property type="evidence" value="ECO:0007669"/>
    <property type="project" value="UniProtKB-UniRule"/>
</dbReference>
<dbReference type="GO" id="GO:0051301">
    <property type="term" value="P:cell division"/>
    <property type="evidence" value="ECO:0007669"/>
    <property type="project" value="UniProtKB-KW"/>
</dbReference>
<dbReference type="GO" id="GO:0071555">
    <property type="term" value="P:cell wall organization"/>
    <property type="evidence" value="ECO:0007669"/>
    <property type="project" value="UniProtKB-KW"/>
</dbReference>
<dbReference type="GO" id="GO:0009252">
    <property type="term" value="P:peptidoglycan biosynthetic process"/>
    <property type="evidence" value="ECO:0007669"/>
    <property type="project" value="UniProtKB-UniRule"/>
</dbReference>
<dbReference type="GO" id="GO:0008360">
    <property type="term" value="P:regulation of cell shape"/>
    <property type="evidence" value="ECO:0007669"/>
    <property type="project" value="UniProtKB-KW"/>
</dbReference>
<dbReference type="Gene3D" id="3.90.190.20">
    <property type="entry name" value="Mur ligase, C-terminal domain"/>
    <property type="match status" value="1"/>
</dbReference>
<dbReference type="Gene3D" id="3.40.1190.10">
    <property type="entry name" value="Mur-like, catalytic domain"/>
    <property type="match status" value="1"/>
</dbReference>
<dbReference type="Gene3D" id="3.40.1390.10">
    <property type="entry name" value="MurE/MurF, N-terminal domain"/>
    <property type="match status" value="1"/>
</dbReference>
<dbReference type="HAMAP" id="MF_00208">
    <property type="entry name" value="MurE"/>
    <property type="match status" value="1"/>
</dbReference>
<dbReference type="InterPro" id="IPR036565">
    <property type="entry name" value="Mur-like_cat_sf"/>
</dbReference>
<dbReference type="InterPro" id="IPR004101">
    <property type="entry name" value="Mur_ligase_C"/>
</dbReference>
<dbReference type="InterPro" id="IPR036615">
    <property type="entry name" value="Mur_ligase_C_dom_sf"/>
</dbReference>
<dbReference type="InterPro" id="IPR013221">
    <property type="entry name" value="Mur_ligase_cen"/>
</dbReference>
<dbReference type="InterPro" id="IPR000713">
    <property type="entry name" value="Mur_ligase_N"/>
</dbReference>
<dbReference type="InterPro" id="IPR035911">
    <property type="entry name" value="MurE/MurF_N"/>
</dbReference>
<dbReference type="InterPro" id="IPR005761">
    <property type="entry name" value="UDP-N-AcMur-Glu-dNH2Pim_ligase"/>
</dbReference>
<dbReference type="NCBIfam" id="TIGR01085">
    <property type="entry name" value="murE"/>
    <property type="match status" value="1"/>
</dbReference>
<dbReference type="NCBIfam" id="NF001124">
    <property type="entry name" value="PRK00139.1-2"/>
    <property type="match status" value="1"/>
</dbReference>
<dbReference type="NCBIfam" id="NF001126">
    <property type="entry name" value="PRK00139.1-4"/>
    <property type="match status" value="1"/>
</dbReference>
<dbReference type="PANTHER" id="PTHR23135">
    <property type="entry name" value="MUR LIGASE FAMILY MEMBER"/>
    <property type="match status" value="1"/>
</dbReference>
<dbReference type="PANTHER" id="PTHR23135:SF4">
    <property type="entry name" value="UDP-N-ACETYLMURAMOYL-L-ALANYL-D-GLUTAMATE--2,6-DIAMINOPIMELATE LIGASE MURE HOMOLOG, CHLOROPLASTIC"/>
    <property type="match status" value="1"/>
</dbReference>
<dbReference type="Pfam" id="PF01225">
    <property type="entry name" value="Mur_ligase"/>
    <property type="match status" value="1"/>
</dbReference>
<dbReference type="Pfam" id="PF02875">
    <property type="entry name" value="Mur_ligase_C"/>
    <property type="match status" value="1"/>
</dbReference>
<dbReference type="Pfam" id="PF08245">
    <property type="entry name" value="Mur_ligase_M"/>
    <property type="match status" value="1"/>
</dbReference>
<dbReference type="SUPFAM" id="SSF53623">
    <property type="entry name" value="MurD-like peptide ligases, catalytic domain"/>
    <property type="match status" value="1"/>
</dbReference>
<dbReference type="SUPFAM" id="SSF53244">
    <property type="entry name" value="MurD-like peptide ligases, peptide-binding domain"/>
    <property type="match status" value="1"/>
</dbReference>
<dbReference type="SUPFAM" id="SSF63418">
    <property type="entry name" value="MurE/MurF N-terminal domain"/>
    <property type="match status" value="1"/>
</dbReference>
<feature type="chain" id="PRO_1000012403" description="UDP-N-acetylmuramoyl-L-alanyl-D-glutamate--2,6-diaminopimelate ligase">
    <location>
        <begin position="1"/>
        <end position="495"/>
    </location>
</feature>
<feature type="short sequence motif" description="Meso-diaminopimelate recognition motif">
    <location>
        <begin position="408"/>
        <end position="411"/>
    </location>
</feature>
<feature type="binding site" evidence="1">
    <location>
        <position position="29"/>
    </location>
    <ligand>
        <name>UDP-N-acetyl-alpha-D-muramoyl-L-alanyl-D-glutamate</name>
        <dbReference type="ChEBI" id="CHEBI:83900"/>
    </ligand>
</feature>
<feature type="binding site" evidence="1">
    <location>
        <begin position="111"/>
        <end position="117"/>
    </location>
    <ligand>
        <name>ATP</name>
        <dbReference type="ChEBI" id="CHEBI:30616"/>
    </ligand>
</feature>
<feature type="binding site" evidence="1">
    <location>
        <begin position="153"/>
        <end position="154"/>
    </location>
    <ligand>
        <name>UDP-N-acetyl-alpha-D-muramoyl-L-alanyl-D-glutamate</name>
        <dbReference type="ChEBI" id="CHEBI:83900"/>
    </ligand>
</feature>
<feature type="binding site" evidence="1">
    <location>
        <position position="180"/>
    </location>
    <ligand>
        <name>UDP-N-acetyl-alpha-D-muramoyl-L-alanyl-D-glutamate</name>
        <dbReference type="ChEBI" id="CHEBI:83900"/>
    </ligand>
</feature>
<feature type="binding site" evidence="1">
    <location>
        <position position="186"/>
    </location>
    <ligand>
        <name>UDP-N-acetyl-alpha-D-muramoyl-L-alanyl-D-glutamate</name>
        <dbReference type="ChEBI" id="CHEBI:83900"/>
    </ligand>
</feature>
<feature type="binding site" evidence="1">
    <location>
        <position position="188"/>
    </location>
    <ligand>
        <name>UDP-N-acetyl-alpha-D-muramoyl-L-alanyl-D-glutamate</name>
        <dbReference type="ChEBI" id="CHEBI:83900"/>
    </ligand>
</feature>
<feature type="binding site" evidence="1">
    <location>
        <position position="384"/>
    </location>
    <ligand>
        <name>meso-2,6-diaminopimelate</name>
        <dbReference type="ChEBI" id="CHEBI:57791"/>
    </ligand>
</feature>
<feature type="binding site" evidence="1">
    <location>
        <begin position="408"/>
        <end position="411"/>
    </location>
    <ligand>
        <name>meso-2,6-diaminopimelate</name>
        <dbReference type="ChEBI" id="CHEBI:57791"/>
    </ligand>
</feature>
<feature type="binding site" evidence="1">
    <location>
        <position position="459"/>
    </location>
    <ligand>
        <name>meso-2,6-diaminopimelate</name>
        <dbReference type="ChEBI" id="CHEBI:57791"/>
    </ligand>
</feature>
<feature type="binding site" evidence="1">
    <location>
        <position position="463"/>
    </location>
    <ligand>
        <name>meso-2,6-diaminopimelate</name>
        <dbReference type="ChEBI" id="CHEBI:57791"/>
    </ligand>
</feature>
<feature type="modified residue" description="N6-carboxylysine" evidence="1">
    <location>
        <position position="220"/>
    </location>
</feature>
<evidence type="ECO:0000255" key="1">
    <source>
        <dbReference type="HAMAP-Rule" id="MF_00208"/>
    </source>
</evidence>
<gene>
    <name evidence="1" type="primary">murE</name>
    <name type="ordered locus">XOO3608</name>
</gene>
<organism>
    <name type="scientific">Xanthomonas oryzae pv. oryzae (strain MAFF 311018)</name>
    <dbReference type="NCBI Taxonomy" id="342109"/>
    <lineage>
        <taxon>Bacteria</taxon>
        <taxon>Pseudomonadati</taxon>
        <taxon>Pseudomonadota</taxon>
        <taxon>Gammaproteobacteria</taxon>
        <taxon>Lysobacterales</taxon>
        <taxon>Lysobacteraceae</taxon>
        <taxon>Xanthomonas</taxon>
    </lineage>
</organism>
<sequence>MSRSMALSQLLPDVALPHDVQVSGLVMDSRTVAPGDAFVAIAGFGAHGLGFVEQARANGATAVLFEPPAPDGLPVPVDAIAVPGLRARLGVMADQFHGRPSHAMRMVGVTGTNGKTSTVQLLAQALTLLGTPTGTLGTLGVGLYGAAVSTGFTTPLVLPTHALLAQLRDEGAQAVAMEVSSHALDQGRVDAVHFDVAVFTNLTRDHLDYHGEMAQYGAAKAKLFTRPGLKAAVVNLDDGFGRTLFASRDPVLRAIGVSSRAHADASVSAQALQLDHNGINFALNIQGEVHPVHSPLLGRFNVDNLLAVAGALWALDIAPAQIATVLGQLQPIHGRMNRLGGAHGAPLVVVDYAHTPDALEQALSSLRSHAQDRLICVFGCGGERDTGKRPQMAAIAELNADVAIVTDDNPRGEDGDAIVADILRGFARPDAAIVQRDRAAAIHQAIAMASASDIVLIAGKGHEPYQEVAGVRHAFDDAIVAAQALLPRTVLGVRP</sequence>
<protein>
    <recommendedName>
        <fullName evidence="1">UDP-N-acetylmuramoyl-L-alanyl-D-glutamate--2,6-diaminopimelate ligase</fullName>
        <ecNumber evidence="1">6.3.2.13</ecNumber>
    </recommendedName>
    <alternativeName>
        <fullName evidence="1">Meso-A2pm-adding enzyme</fullName>
    </alternativeName>
    <alternativeName>
        <fullName evidence="1">Meso-diaminopimelate-adding enzyme</fullName>
    </alternativeName>
    <alternativeName>
        <fullName evidence="1">UDP-MurNAc-L-Ala-D-Glu:meso-diaminopimelate ligase</fullName>
    </alternativeName>
    <alternativeName>
        <fullName evidence="1">UDP-MurNAc-tripeptide synthetase</fullName>
    </alternativeName>
    <alternativeName>
        <fullName evidence="1">UDP-N-acetylmuramyl-tripeptide synthetase</fullName>
    </alternativeName>
</protein>
<comment type="function">
    <text evidence="1">Catalyzes the addition of meso-diaminopimelic acid to the nucleotide precursor UDP-N-acetylmuramoyl-L-alanyl-D-glutamate (UMAG) in the biosynthesis of bacterial cell-wall peptidoglycan.</text>
</comment>
<comment type="catalytic activity">
    <reaction evidence="1">
        <text>UDP-N-acetyl-alpha-D-muramoyl-L-alanyl-D-glutamate + meso-2,6-diaminopimelate + ATP = UDP-N-acetyl-alpha-D-muramoyl-L-alanyl-gamma-D-glutamyl-meso-2,6-diaminopimelate + ADP + phosphate + H(+)</text>
        <dbReference type="Rhea" id="RHEA:23676"/>
        <dbReference type="ChEBI" id="CHEBI:15378"/>
        <dbReference type="ChEBI" id="CHEBI:30616"/>
        <dbReference type="ChEBI" id="CHEBI:43474"/>
        <dbReference type="ChEBI" id="CHEBI:57791"/>
        <dbReference type="ChEBI" id="CHEBI:83900"/>
        <dbReference type="ChEBI" id="CHEBI:83905"/>
        <dbReference type="ChEBI" id="CHEBI:456216"/>
        <dbReference type="EC" id="6.3.2.13"/>
    </reaction>
</comment>
<comment type="cofactor">
    <cofactor evidence="1">
        <name>Mg(2+)</name>
        <dbReference type="ChEBI" id="CHEBI:18420"/>
    </cofactor>
</comment>
<comment type="pathway">
    <text evidence="1">Cell wall biogenesis; peptidoglycan biosynthesis.</text>
</comment>
<comment type="subcellular location">
    <subcellularLocation>
        <location evidence="1">Cytoplasm</location>
    </subcellularLocation>
</comment>
<comment type="PTM">
    <text evidence="1">Carboxylation is probably crucial for Mg(2+) binding and, consequently, for the gamma-phosphate positioning of ATP.</text>
</comment>
<comment type="similarity">
    <text evidence="1">Belongs to the MurCDEF family. MurE subfamily.</text>
</comment>
<reference key="1">
    <citation type="journal article" date="2005" name="Jpn. Agric. Res. Q.">
        <title>Genome sequence of Xanthomonas oryzae pv. oryzae suggests contribution of large numbers of effector genes and insertion sequences to its race diversity.</title>
        <authorList>
            <person name="Ochiai H."/>
            <person name="Inoue Y."/>
            <person name="Takeya M."/>
            <person name="Sasaki A."/>
            <person name="Kaku H."/>
        </authorList>
    </citation>
    <scope>NUCLEOTIDE SEQUENCE [LARGE SCALE GENOMIC DNA]</scope>
    <source>
        <strain>MAFF 311018</strain>
    </source>
</reference>
<name>MURE_XANOM</name>
<keyword id="KW-0067">ATP-binding</keyword>
<keyword id="KW-0131">Cell cycle</keyword>
<keyword id="KW-0132">Cell division</keyword>
<keyword id="KW-0133">Cell shape</keyword>
<keyword id="KW-0961">Cell wall biogenesis/degradation</keyword>
<keyword id="KW-0963">Cytoplasm</keyword>
<keyword id="KW-0436">Ligase</keyword>
<keyword id="KW-0460">Magnesium</keyword>
<keyword id="KW-0547">Nucleotide-binding</keyword>
<keyword id="KW-0573">Peptidoglycan synthesis</keyword>